<evidence type="ECO:0000250" key="1"/>
<evidence type="ECO:0000255" key="2">
    <source>
        <dbReference type="HAMAP-Rule" id="MF_01106"/>
    </source>
</evidence>
<evidence type="ECO:0000269" key="3">
    <source ref="2"/>
</evidence>
<evidence type="ECO:0000305" key="4"/>
<evidence type="ECO:0007829" key="5">
    <source>
        <dbReference type="PDB" id="1VRA"/>
    </source>
</evidence>
<name>ARGJ_HALH5</name>
<organism>
    <name type="scientific">Halalkalibacterium halodurans (strain ATCC BAA-125 / DSM 18197 / FERM 7344 / JCM 9153 / C-125)</name>
    <name type="common">Bacillus halodurans</name>
    <dbReference type="NCBI Taxonomy" id="272558"/>
    <lineage>
        <taxon>Bacteria</taxon>
        <taxon>Bacillati</taxon>
        <taxon>Bacillota</taxon>
        <taxon>Bacilli</taxon>
        <taxon>Bacillales</taxon>
        <taxon>Bacillaceae</taxon>
        <taxon>Halalkalibacterium (ex Joshi et al. 2022)</taxon>
    </lineage>
</organism>
<proteinExistence type="evidence at protein level"/>
<sequence>MNVINETANVLKLETGSVTSAKGFSAVGIHTGVKRKRKDLGAIVCEVPASSAAVYTLNKVQAAPLKVTQESIAVEGKLQAMIVNSGIANACTGKRGLDDAYTMRAVGAETFHIPEHYVAVTSTGVIGEFLPMDVITNGIRQLKPEATIEGAHAFNEAILTTDTVEKHTCYQTIVNGKTVTVGGVAKGSGMIHPNMATMLSFVTTDANIDHGHLQGALSAITNETFNRITVDGDTSTNDMVVVMASGLAENEALTPEHPDWANFYKALQLACEDLAKQIARDGEGATKLIEVEVTGAANDQEAGMVAKQIVGSDLVKTAIYGADANWGRIICAIGYSGCEVNQETIDIAIGPIVTLKQSEPTGFSEEEATAYLKEADPVKISVNLHIGNGTGKAWGCDLTYDYVRINAGYRT</sequence>
<reference key="1">
    <citation type="journal article" date="2000" name="Nucleic Acids Res.">
        <title>Complete genome sequence of the alkaliphilic bacterium Bacillus halodurans and genomic sequence comparison with Bacillus subtilis.</title>
        <authorList>
            <person name="Takami H."/>
            <person name="Nakasone K."/>
            <person name="Takaki Y."/>
            <person name="Maeno G."/>
            <person name="Sasaki R."/>
            <person name="Masui N."/>
            <person name="Fuji F."/>
            <person name="Hirama C."/>
            <person name="Nakamura Y."/>
            <person name="Ogasawara N."/>
            <person name="Kuhara S."/>
            <person name="Horikoshi K."/>
        </authorList>
    </citation>
    <scope>NUCLEOTIDE SEQUENCE [LARGE SCALE GENOMIC DNA]</scope>
    <source>
        <strain>ATCC BAA-125 / DSM 18197 / FERM 7344 / JCM 9153 / C-125</strain>
    </source>
</reference>
<reference key="2">
    <citation type="submission" date="2011-07" db="PDB data bank">
        <title>Crystal structure of arginine biosynthesis bifunctional protein argj (10175521) from bacillus halodurans at 2.00 a resolution.</title>
        <authorList>
            <consortium name="Joint center for structural genomics (JCSG)"/>
        </authorList>
    </citation>
    <scope>X-RAY CRYSTALLOGRAPHY (2.0 ANGSTROMS)</scope>
    <scope>SUBUNIT</scope>
</reference>
<comment type="function">
    <text evidence="2">Catalyzes two activities which are involved in the cyclic version of arginine biosynthesis: the synthesis of N-acetylglutamate from glutamate and acetyl-CoA as the acetyl donor, and of ornithine by transacetylation between N(2)-acetylornithine and glutamate.</text>
</comment>
<comment type="catalytic activity">
    <reaction evidence="2">
        <text>N(2)-acetyl-L-ornithine + L-glutamate = N-acetyl-L-glutamate + L-ornithine</text>
        <dbReference type="Rhea" id="RHEA:15349"/>
        <dbReference type="ChEBI" id="CHEBI:29985"/>
        <dbReference type="ChEBI" id="CHEBI:44337"/>
        <dbReference type="ChEBI" id="CHEBI:46911"/>
        <dbReference type="ChEBI" id="CHEBI:57805"/>
        <dbReference type="EC" id="2.3.1.35"/>
    </reaction>
</comment>
<comment type="catalytic activity">
    <reaction evidence="2">
        <text>L-glutamate + acetyl-CoA = N-acetyl-L-glutamate + CoA + H(+)</text>
        <dbReference type="Rhea" id="RHEA:24292"/>
        <dbReference type="ChEBI" id="CHEBI:15378"/>
        <dbReference type="ChEBI" id="CHEBI:29985"/>
        <dbReference type="ChEBI" id="CHEBI:44337"/>
        <dbReference type="ChEBI" id="CHEBI:57287"/>
        <dbReference type="ChEBI" id="CHEBI:57288"/>
        <dbReference type="EC" id="2.3.1.1"/>
    </reaction>
</comment>
<comment type="activity regulation">
    <text evidence="1">Feedback inhibition by L-ornithine.</text>
</comment>
<comment type="pathway">
    <text evidence="2">Amino-acid biosynthesis; L-arginine biosynthesis; L-ornithine and N-acetyl-L-glutamate from L-glutamate and N(2)-acetyl-L-ornithine (cyclic): step 1/1.</text>
</comment>
<comment type="pathway">
    <text evidence="2">Amino-acid biosynthesis; L-arginine biosynthesis; N(2)-acetyl-L-ornithine from L-glutamate: step 1/4.</text>
</comment>
<comment type="subunit">
    <text evidence="2 3">Heterotetramer of two alpha and two beta chains.</text>
</comment>
<comment type="subcellular location">
    <subcellularLocation>
        <location evidence="2 4">Cytoplasm</location>
    </subcellularLocation>
</comment>
<comment type="similarity">
    <text evidence="2 4">Belongs to the ArgJ family.</text>
</comment>
<accession>Q9K8V3</accession>
<feature type="chain" id="PRO_0000002113" description="Arginine biosynthesis bifunctional protein ArgJ alpha chain" evidence="2">
    <location>
        <begin position="1"/>
        <end position="196"/>
    </location>
</feature>
<feature type="chain" id="PRO_0000002114" description="Arginine biosynthesis bifunctional protein ArgJ beta chain" evidence="2">
    <location>
        <begin position="197"/>
        <end position="411"/>
    </location>
</feature>
<feature type="active site" description="Nucleophile" evidence="2">
    <location>
        <position position="197"/>
    </location>
</feature>
<feature type="binding site" evidence="2">
    <location>
        <position position="160"/>
    </location>
    <ligand>
        <name>substrate</name>
    </ligand>
</feature>
<feature type="binding site" evidence="2">
    <location>
        <position position="186"/>
    </location>
    <ligand>
        <name>substrate</name>
    </ligand>
</feature>
<feature type="binding site" evidence="2">
    <location>
        <position position="197"/>
    </location>
    <ligand>
        <name>substrate</name>
    </ligand>
</feature>
<feature type="binding site" evidence="2">
    <location>
        <position position="283"/>
    </location>
    <ligand>
        <name>substrate</name>
    </ligand>
</feature>
<feature type="binding site" evidence="2">
    <location>
        <position position="406"/>
    </location>
    <ligand>
        <name>substrate</name>
    </ligand>
</feature>
<feature type="binding site" evidence="2">
    <location>
        <position position="411"/>
    </location>
    <ligand>
        <name>substrate</name>
    </ligand>
</feature>
<feature type="site" description="Involved in the stabilization of negative charge on the oxyanion by the formation of the oxyanion hole" evidence="2">
    <location>
        <position position="123"/>
    </location>
</feature>
<feature type="site" description="Involved in the stabilization of negative charge on the oxyanion by the formation of the oxyanion hole" evidence="2">
    <location>
        <position position="124"/>
    </location>
</feature>
<feature type="site" description="Cleavage; by autolysis" evidence="2">
    <location>
        <begin position="196"/>
        <end position="197"/>
    </location>
</feature>
<feature type="helix" evidence="5">
    <location>
        <begin position="18"/>
        <end position="20"/>
    </location>
</feature>
<feature type="strand" evidence="5">
    <location>
        <begin position="24"/>
        <end position="29"/>
    </location>
</feature>
<feature type="strand" evidence="5">
    <location>
        <begin position="32"/>
        <end position="37"/>
    </location>
</feature>
<feature type="strand" evidence="5">
    <location>
        <begin position="40"/>
        <end position="56"/>
    </location>
</feature>
<feature type="helix" evidence="5">
    <location>
        <begin position="63"/>
        <end position="75"/>
    </location>
</feature>
<feature type="strand" evidence="5">
    <location>
        <begin position="76"/>
        <end position="87"/>
    </location>
</feature>
<feature type="helix" evidence="5">
    <location>
        <begin position="93"/>
        <end position="111"/>
    </location>
</feature>
<feature type="helix" evidence="5">
    <location>
        <begin position="115"/>
        <end position="117"/>
    </location>
</feature>
<feature type="strand" evidence="5">
    <location>
        <begin position="118"/>
        <end position="127"/>
    </location>
</feature>
<feature type="helix" evidence="5">
    <location>
        <begin position="132"/>
        <end position="141"/>
    </location>
</feature>
<feature type="strand" evidence="5">
    <location>
        <begin position="145"/>
        <end position="147"/>
    </location>
</feature>
<feature type="helix" evidence="5">
    <location>
        <begin position="148"/>
        <end position="158"/>
    </location>
</feature>
<feature type="strand" evidence="5">
    <location>
        <begin position="167"/>
        <end position="174"/>
    </location>
</feature>
<feature type="strand" evidence="5">
    <location>
        <begin position="177"/>
        <end position="186"/>
    </location>
</feature>
<feature type="strand" evidence="5">
    <location>
        <begin position="188"/>
        <end position="190"/>
    </location>
</feature>
<feature type="strand" evidence="5">
    <location>
        <begin position="199"/>
        <end position="204"/>
    </location>
</feature>
<feature type="helix" evidence="5">
    <location>
        <begin position="210"/>
        <end position="223"/>
    </location>
</feature>
<feature type="helix" evidence="5">
    <location>
        <begin position="225"/>
        <end position="227"/>
    </location>
</feature>
<feature type="strand" evidence="5">
    <location>
        <begin position="230"/>
        <end position="232"/>
    </location>
</feature>
<feature type="strand" evidence="5">
    <location>
        <begin position="239"/>
        <end position="244"/>
    </location>
</feature>
<feature type="helix" evidence="5">
    <location>
        <begin position="260"/>
        <end position="280"/>
    </location>
</feature>
<feature type="strand" evidence="5">
    <location>
        <begin position="288"/>
        <end position="298"/>
    </location>
</feature>
<feature type="helix" evidence="5">
    <location>
        <begin position="299"/>
        <end position="310"/>
    </location>
</feature>
<feature type="helix" evidence="5">
    <location>
        <begin position="313"/>
        <end position="320"/>
    </location>
</feature>
<feature type="helix" evidence="5">
    <location>
        <begin position="326"/>
        <end position="335"/>
    </location>
</feature>
<feature type="strand" evidence="5">
    <location>
        <begin position="336"/>
        <end position="338"/>
    </location>
</feature>
<feature type="strand" evidence="5">
    <location>
        <begin position="346"/>
        <end position="349"/>
    </location>
</feature>
<feature type="strand" evidence="5">
    <location>
        <begin position="352"/>
        <end position="356"/>
    </location>
</feature>
<feature type="helix" evidence="5">
    <location>
        <begin position="365"/>
        <end position="374"/>
    </location>
</feature>
<feature type="strand" evidence="5">
    <location>
        <begin position="376"/>
        <end position="383"/>
    </location>
</feature>
<feature type="strand" evidence="5">
    <location>
        <begin position="386"/>
        <end position="396"/>
    </location>
</feature>
<feature type="helix" evidence="5">
    <location>
        <begin position="400"/>
        <end position="406"/>
    </location>
</feature>
<protein>
    <recommendedName>
        <fullName evidence="2">Arginine biosynthesis bifunctional protein ArgJ</fullName>
    </recommendedName>
    <domain>
        <recommendedName>
            <fullName evidence="2">Glutamate N-acetyltransferase</fullName>
            <ecNumber evidence="2">2.3.1.35</ecNumber>
        </recommendedName>
        <alternativeName>
            <fullName evidence="2">Ornithine acetyltransferase</fullName>
            <shortName evidence="2">OATase</shortName>
        </alternativeName>
        <alternativeName>
            <fullName evidence="2">Ornithine transacetylase</fullName>
        </alternativeName>
    </domain>
    <domain>
        <recommendedName>
            <fullName evidence="2">Amino-acid acetyltransferase</fullName>
            <ecNumber evidence="2">2.3.1.1</ecNumber>
        </recommendedName>
        <alternativeName>
            <fullName evidence="2">N-acetylglutamate synthase</fullName>
            <shortName evidence="2">AGSase</shortName>
        </alternativeName>
    </domain>
    <component>
        <recommendedName>
            <fullName evidence="2">Arginine biosynthesis bifunctional protein ArgJ alpha chain</fullName>
        </recommendedName>
    </component>
    <component>
        <recommendedName>
            <fullName evidence="2">Arginine biosynthesis bifunctional protein ArgJ beta chain</fullName>
        </recommendedName>
    </component>
</protein>
<gene>
    <name evidence="2" type="primary">argJ</name>
    <name type="ordered locus">BH2899</name>
</gene>
<keyword id="KW-0002">3D-structure</keyword>
<keyword id="KW-0012">Acyltransferase</keyword>
<keyword id="KW-0028">Amino-acid biosynthesis</keyword>
<keyword id="KW-0055">Arginine biosynthesis</keyword>
<keyword id="KW-0068">Autocatalytic cleavage</keyword>
<keyword id="KW-0963">Cytoplasm</keyword>
<keyword id="KW-0511">Multifunctional enzyme</keyword>
<keyword id="KW-1185">Reference proteome</keyword>
<keyword id="KW-0808">Transferase</keyword>
<dbReference type="EC" id="2.3.1.35" evidence="2"/>
<dbReference type="EC" id="2.3.1.1" evidence="2"/>
<dbReference type="EMBL" id="BA000004">
    <property type="protein sequence ID" value="BAB06618.1"/>
    <property type="molecule type" value="Genomic_DNA"/>
</dbReference>
<dbReference type="PIR" id="C84012">
    <property type="entry name" value="C84012"/>
</dbReference>
<dbReference type="RefSeq" id="WP_010899046.1">
    <property type="nucleotide sequence ID" value="NC_002570.2"/>
</dbReference>
<dbReference type="PDB" id="1VRA">
    <property type="method" value="X-ray"/>
    <property type="resolution" value="2.00 A"/>
    <property type="chains" value="A=1-196, B=197-411"/>
</dbReference>
<dbReference type="PDBsum" id="1VRA"/>
<dbReference type="SMR" id="Q9K8V3"/>
<dbReference type="STRING" id="272558.gene:10728809"/>
<dbReference type="MEROPS" id="T05.002"/>
<dbReference type="KEGG" id="bha:BH2899"/>
<dbReference type="eggNOG" id="COG1364">
    <property type="taxonomic scope" value="Bacteria"/>
</dbReference>
<dbReference type="HOGENOM" id="CLU_027172_1_0_9"/>
<dbReference type="OrthoDB" id="9804242at2"/>
<dbReference type="UniPathway" id="UPA00068">
    <property type="reaction ID" value="UER00106"/>
</dbReference>
<dbReference type="UniPathway" id="UPA00068">
    <property type="reaction ID" value="UER00111"/>
</dbReference>
<dbReference type="EvolutionaryTrace" id="Q9K8V3"/>
<dbReference type="Proteomes" id="UP000001258">
    <property type="component" value="Chromosome"/>
</dbReference>
<dbReference type="GO" id="GO:0005737">
    <property type="term" value="C:cytoplasm"/>
    <property type="evidence" value="ECO:0007669"/>
    <property type="project" value="UniProtKB-SubCell"/>
</dbReference>
<dbReference type="GO" id="GO:0004358">
    <property type="term" value="F:glutamate N-acetyltransferase activity"/>
    <property type="evidence" value="ECO:0007669"/>
    <property type="project" value="UniProtKB-UniRule"/>
</dbReference>
<dbReference type="GO" id="GO:0004042">
    <property type="term" value="F:L-glutamate N-acetyltransferase activity"/>
    <property type="evidence" value="ECO:0007669"/>
    <property type="project" value="UniProtKB-UniRule"/>
</dbReference>
<dbReference type="GO" id="GO:0006526">
    <property type="term" value="P:L-arginine biosynthetic process"/>
    <property type="evidence" value="ECO:0007669"/>
    <property type="project" value="UniProtKB-UniRule"/>
</dbReference>
<dbReference type="GO" id="GO:0006592">
    <property type="term" value="P:ornithine biosynthetic process"/>
    <property type="evidence" value="ECO:0007669"/>
    <property type="project" value="TreeGrafter"/>
</dbReference>
<dbReference type="CDD" id="cd02152">
    <property type="entry name" value="OAT"/>
    <property type="match status" value="1"/>
</dbReference>
<dbReference type="FunFam" id="3.10.20.340:FF:000001">
    <property type="entry name" value="Arginine biosynthesis bifunctional protein ArgJ, chloroplastic"/>
    <property type="match status" value="1"/>
</dbReference>
<dbReference type="FunFam" id="3.60.70.12:FF:000001">
    <property type="entry name" value="Arginine biosynthesis bifunctional protein ArgJ, chloroplastic"/>
    <property type="match status" value="1"/>
</dbReference>
<dbReference type="FunFam" id="3.30.2330.10:FF:000001">
    <property type="entry name" value="Arginine biosynthesis bifunctional protein ArgJ, mitochondrial"/>
    <property type="match status" value="1"/>
</dbReference>
<dbReference type="Gene3D" id="3.30.2330.10">
    <property type="entry name" value="arginine biosynthesis bifunctional protein suprefamily"/>
    <property type="match status" value="1"/>
</dbReference>
<dbReference type="Gene3D" id="3.10.20.340">
    <property type="entry name" value="ArgJ beta chain, C-terminal domain"/>
    <property type="match status" value="1"/>
</dbReference>
<dbReference type="Gene3D" id="3.60.70.12">
    <property type="entry name" value="L-amino peptidase D-ALA esterase/amidase"/>
    <property type="match status" value="1"/>
</dbReference>
<dbReference type="HAMAP" id="MF_01106">
    <property type="entry name" value="ArgJ"/>
    <property type="match status" value="1"/>
</dbReference>
<dbReference type="InterPro" id="IPR002813">
    <property type="entry name" value="Arg_biosynth_ArgJ"/>
</dbReference>
<dbReference type="InterPro" id="IPR016117">
    <property type="entry name" value="ArgJ-like_dom_sf"/>
</dbReference>
<dbReference type="InterPro" id="IPR042195">
    <property type="entry name" value="ArgJ_beta_C"/>
</dbReference>
<dbReference type="NCBIfam" id="TIGR00120">
    <property type="entry name" value="ArgJ"/>
    <property type="match status" value="1"/>
</dbReference>
<dbReference type="NCBIfam" id="NF003802">
    <property type="entry name" value="PRK05388.1"/>
    <property type="match status" value="1"/>
</dbReference>
<dbReference type="PANTHER" id="PTHR23100">
    <property type="entry name" value="ARGININE BIOSYNTHESIS BIFUNCTIONAL PROTEIN ARGJ"/>
    <property type="match status" value="1"/>
</dbReference>
<dbReference type="PANTHER" id="PTHR23100:SF0">
    <property type="entry name" value="ARGININE BIOSYNTHESIS BIFUNCTIONAL PROTEIN ARGJ, MITOCHONDRIAL"/>
    <property type="match status" value="1"/>
</dbReference>
<dbReference type="Pfam" id="PF01960">
    <property type="entry name" value="ArgJ"/>
    <property type="match status" value="1"/>
</dbReference>
<dbReference type="SUPFAM" id="SSF56266">
    <property type="entry name" value="DmpA/ArgJ-like"/>
    <property type="match status" value="1"/>
</dbReference>